<protein>
    <recommendedName>
        <fullName evidence="5">Xenovulene A biosynthesis cluster protein asL2</fullName>
    </recommendedName>
</protein>
<sequence>MAAPSLESNWLVQIPNQSGSHVAQARKDSFAEHMSYNKTHIEAGRMVLAGPLVEALPQDGQPPVITGSIMVWKATAGEREMLDKWLSDNPFATSGVWDLTKMECTPFLCGVRKGL</sequence>
<feature type="chain" id="PRO_0000449179" description="Xenovulene A biosynthesis cluster protein asL2">
    <location>
        <begin position="1"/>
        <end position="115"/>
    </location>
</feature>
<proteinExistence type="evidence at protein level"/>
<evidence type="ECO:0000269" key="1">
    <source>
    </source>
</evidence>
<evidence type="ECO:0000269" key="2">
    <source>
    </source>
</evidence>
<evidence type="ECO:0000269" key="3">
    <source>
    </source>
</evidence>
<evidence type="ECO:0000269" key="4">
    <source>
    </source>
</evidence>
<evidence type="ECO:0000303" key="5">
    <source>
    </source>
</evidence>
<dbReference type="EMBL" id="MG736817">
    <property type="protein sequence ID" value="AWM95788.1"/>
    <property type="molecule type" value="Genomic_DNA"/>
</dbReference>
<dbReference type="SMR" id="A0A2U8U2L2"/>
<dbReference type="Gene3D" id="3.30.70.1060">
    <property type="entry name" value="Dimeric alpha+beta barrel"/>
    <property type="match status" value="1"/>
</dbReference>
<dbReference type="InterPro" id="IPR011008">
    <property type="entry name" value="Dimeric_a/b-barrel"/>
</dbReference>
<dbReference type="InterPro" id="IPR051807">
    <property type="entry name" value="Sec-metab_biosynth-assoc"/>
</dbReference>
<dbReference type="InterPro" id="IPR005545">
    <property type="entry name" value="YCII"/>
</dbReference>
<dbReference type="PANTHER" id="PTHR33606">
    <property type="entry name" value="PROTEIN YCII"/>
    <property type="match status" value="1"/>
</dbReference>
<dbReference type="PANTHER" id="PTHR33606:SF3">
    <property type="entry name" value="PROTEIN YCII"/>
    <property type="match status" value="1"/>
</dbReference>
<dbReference type="Pfam" id="PF03795">
    <property type="entry name" value="YCII"/>
    <property type="match status" value="1"/>
</dbReference>
<dbReference type="SUPFAM" id="SSF54909">
    <property type="entry name" value="Dimeric alpha+beta barrel"/>
    <property type="match status" value="1"/>
</dbReference>
<gene>
    <name evidence="5" type="primary">asL2</name>
</gene>
<comment type="function">
    <text evidence="1 2 3">Part of the gene cluster that mediates the biosynthesis of xenovulene A, an unusual meroterpenoid that has potent inhibitory effects on the human gamma-aminobutyrate A (GABAA) benzodiazepine receptor (PubMed:29773797). The first step of xenovulene A biosynthesis is the biosynthesis of 3-methylorcinaldehyde performed by the non-reducing polyketide synthase aspks1 (PubMed:17912413, PubMed:20552126, PubMed:29773797). The salicylate hydroxylase asL1 then catalyzes the oxidative dearomatization of 3-methylorcinaldehyde to yield a dearomatized hydroxycyclohexadione (PubMed:29773797). The 2-oxoglutarate-dependent dioxygenase asL3 further catalyzes the oxidative ring expansion to provide the first tropolone metabolite (PubMed:29773797). The cytochrome P450 monooxygenase asR2 allows the synthesis of tropolone hemiacetal (PubMed:29773797). In parallel, a previously unrecognised class of terpene cyclase, asR6, produces alpha-humulene from farnesylpyrophosphate (FPP) (PubMed:29773797). The putative Diels-Alderase asR5 probably catalyzes the formation of the tropolone-humulene skeleton by linking humulene and the polyketide moiety (PubMed:29773797). Oxidative-ring contractions catalyzed by asL4 and asL6 then processively remove carbon atoms from the polyketide to yield xenovulene A (PubMed:29773797).</text>
</comment>
<comment type="induction">
    <text evidence="3">Expression is significantly up-regulated under xenovulene A producing condition.</text>
</comment>
<comment type="disruption phenotype">
    <text evidence="3">Does not affect the production of xenovulene A.</text>
</comment>
<comment type="biotechnology">
    <text evidence="4">Xenovulene A is a natural product exhibiting little structural resemblance with classical benzodiazepines yet is able to displace high-affinity ligand binding to the benzodiazepine site of the gamma-aminobutyrate A (GABAA) receptor and could be potentially used as an anti-depressant with reduced addictive properties.</text>
</comment>
<accession>A0A2U8U2L2</accession>
<reference key="1">
    <citation type="journal article" date="2018" name="Nat. Commun.">
        <title>Three previously unrecognised classes of biosynthetic enzymes revealed during the production of xenovulene A.</title>
        <authorList>
            <person name="Schor R."/>
            <person name="Schotte C."/>
            <person name="Wibberg D."/>
            <person name="Kalinowski J."/>
            <person name="Cox R.J."/>
        </authorList>
    </citation>
    <scope>NUCLEOTIDE SEQUENCE [GENOMIC DNA]</scope>
    <scope>INDUCTION</scope>
    <scope>FUNCTION</scope>
    <scope>DISRUPTION PHENOTYPE</scope>
</reference>
<reference key="2">
    <citation type="journal article" date="1997" name="J. Pharmacol. Exp. Ther.">
        <title>Regulation of neuronal and recombinant GABA(A) receptor ion channels by xenovulene A, a natural product isolated from Acremonium strictum.</title>
        <authorList>
            <person name="Thomas P."/>
            <person name="Sundaram H."/>
            <person name="Krishek B.J."/>
            <person name="Chazot P."/>
            <person name="Xie X."/>
            <person name="Bevan P."/>
            <person name="Brocchini S.J."/>
            <person name="Latham C.J."/>
            <person name="Charlton P."/>
            <person name="Moore M."/>
            <person name="Lewis S.J."/>
            <person name="Thornton D.M."/>
            <person name="Stephenson F.A."/>
            <person name="Smart T.G."/>
        </authorList>
    </citation>
    <scope>BIOTECHNOLOGY</scope>
</reference>
<reference key="3">
    <citation type="journal article" date="2007" name="Chem. Commun. (Camb.)">
        <title>Characterisation of 3-methylorcinaldehyde synthase (MOS) in Acremonium strictum: first observation of a reductive release mechanism during polyketide biosynthesis.</title>
        <authorList>
            <person name="Bailey A.M."/>
            <person name="Cox R.J."/>
            <person name="Harley K."/>
            <person name="Lazarus C.M."/>
            <person name="Simpson T.J."/>
            <person name="Skellam E."/>
        </authorList>
    </citation>
    <scope>FUNCTION</scope>
</reference>
<reference key="4">
    <citation type="journal article" date="2010" name="Chem. Commun. (Camb.)">
        <title>Catalytic role of the C-terminal domains of a fungal non-reducing polyketide synthase.</title>
        <authorList>
            <person name="Fisch K.M."/>
            <person name="Skellam E."/>
            <person name="Ivison D."/>
            <person name="Cox R.J."/>
            <person name="Bailey A.M."/>
            <person name="Lazarus C.M."/>
            <person name="Simpson T.J."/>
        </authorList>
    </citation>
    <scope>FUNCTION</scope>
</reference>
<name>ASL2_SARSH</name>
<organism>
    <name type="scientific">Sarocladium schorii</name>
    <name type="common">Acremonium strictum (strain IMI 501407)</name>
    <dbReference type="NCBI Taxonomy" id="2203296"/>
    <lineage>
        <taxon>Eukaryota</taxon>
        <taxon>Fungi</taxon>
        <taxon>Dikarya</taxon>
        <taxon>Ascomycota</taxon>
        <taxon>Pezizomycotina</taxon>
        <taxon>Sordariomycetes</taxon>
        <taxon>Hypocreomycetidae</taxon>
        <taxon>Hypocreales</taxon>
        <taxon>Sarocladiaceae</taxon>
        <taxon>Sarocladium</taxon>
    </lineage>
</organism>